<dbReference type="EC" id="4.2.1.113" evidence="2"/>
<dbReference type="EMBL" id="BX842647">
    <property type="protein sequence ID" value="CAE78520.1"/>
    <property type="molecule type" value="Genomic_DNA"/>
</dbReference>
<dbReference type="RefSeq" id="WP_011163122.1">
    <property type="nucleotide sequence ID" value="NC_005363.1"/>
</dbReference>
<dbReference type="PDB" id="3CAW">
    <property type="method" value="X-ray"/>
    <property type="resolution" value="1.87 A"/>
    <property type="chains" value="A/B=1-330"/>
</dbReference>
<dbReference type="PDBsum" id="3CAW"/>
<dbReference type="SMR" id="Q6MQC7"/>
<dbReference type="STRING" id="264462.Bd0547"/>
<dbReference type="GeneID" id="93011649"/>
<dbReference type="KEGG" id="bba:Bd0547"/>
<dbReference type="eggNOG" id="COG4948">
    <property type="taxonomic scope" value="Bacteria"/>
</dbReference>
<dbReference type="HOGENOM" id="CLU_878898_0_0_7"/>
<dbReference type="UniPathway" id="UPA00995"/>
<dbReference type="UniPathway" id="UPA01057">
    <property type="reaction ID" value="UER00165"/>
</dbReference>
<dbReference type="EvolutionaryTrace" id="Q6MQC7"/>
<dbReference type="Proteomes" id="UP000008080">
    <property type="component" value="Chromosome"/>
</dbReference>
<dbReference type="GO" id="GO:0016829">
    <property type="term" value="F:lyase activity"/>
    <property type="evidence" value="ECO:0007669"/>
    <property type="project" value="UniProtKB-KW"/>
</dbReference>
<dbReference type="GO" id="GO:0046872">
    <property type="term" value="F:metal ion binding"/>
    <property type="evidence" value="ECO:0007669"/>
    <property type="project" value="UniProtKB-KW"/>
</dbReference>
<dbReference type="GO" id="GO:0009234">
    <property type="term" value="P:menaquinone biosynthetic process"/>
    <property type="evidence" value="ECO:0007669"/>
    <property type="project" value="UniProtKB-KW"/>
</dbReference>
<dbReference type="GO" id="GO:0042372">
    <property type="term" value="P:phylloquinone biosynthetic process"/>
    <property type="evidence" value="ECO:0007669"/>
    <property type="project" value="UniProtKB-UniPathway"/>
</dbReference>
<dbReference type="Gene3D" id="3.20.20.120">
    <property type="entry name" value="Enolase-like C-terminal domain"/>
    <property type="match status" value="1"/>
</dbReference>
<dbReference type="Gene3D" id="3.30.390.10">
    <property type="entry name" value="Enolase-like, N-terminal domain"/>
    <property type="match status" value="1"/>
</dbReference>
<dbReference type="InterPro" id="IPR036849">
    <property type="entry name" value="Enolase-like_C_sf"/>
</dbReference>
<dbReference type="InterPro" id="IPR029017">
    <property type="entry name" value="Enolase-like_N"/>
</dbReference>
<dbReference type="InterPro" id="IPR041338">
    <property type="entry name" value="OSBS_N"/>
</dbReference>
<dbReference type="Pfam" id="PF22015">
    <property type="entry name" value="OSBS_N"/>
    <property type="match status" value="1"/>
</dbReference>
<dbReference type="SUPFAM" id="SSF51604">
    <property type="entry name" value="Enolase C-terminal domain-like"/>
    <property type="match status" value="1"/>
</dbReference>
<name>MENC_BDEBA</name>
<proteinExistence type="evidence at protein level"/>
<feature type="chain" id="PRO_0000455092" description="o-succinylbenzoate synthase">
    <location>
        <begin position="1"/>
        <end position="330"/>
    </location>
</feature>
<feature type="active site" description="Proton donor" evidence="1">
    <location>
        <position position="130"/>
    </location>
</feature>
<feature type="active site" description="Proton acceptor" evidence="1">
    <location>
        <position position="228"/>
    </location>
</feature>
<feature type="binding site" evidence="2 6">
    <location>
        <position position="155"/>
    </location>
    <ligand>
        <name>Mg(2+)</name>
        <dbReference type="ChEBI" id="CHEBI:18420"/>
    </ligand>
</feature>
<feature type="binding site" evidence="2 6">
    <location>
        <position position="184"/>
    </location>
    <ligand>
        <name>Mg(2+)</name>
        <dbReference type="ChEBI" id="CHEBI:18420"/>
    </ligand>
</feature>
<feature type="binding site" evidence="2 6">
    <location>
        <position position="206"/>
    </location>
    <ligand>
        <name>Mg(2+)</name>
        <dbReference type="ChEBI" id="CHEBI:18420"/>
    </ligand>
</feature>
<feature type="strand" evidence="7">
    <location>
        <begin position="4"/>
        <end position="11"/>
    </location>
</feature>
<feature type="strand" evidence="7">
    <location>
        <begin position="26"/>
        <end position="34"/>
    </location>
</feature>
<feature type="strand" evidence="7">
    <location>
        <begin position="40"/>
        <end position="45"/>
    </location>
</feature>
<feature type="helix" evidence="7">
    <location>
        <begin position="49"/>
        <end position="51"/>
    </location>
</feature>
<feature type="helix" evidence="7">
    <location>
        <begin position="56"/>
        <end position="65"/>
    </location>
</feature>
<feature type="helix" evidence="7">
    <location>
        <begin position="70"/>
        <end position="87"/>
    </location>
</feature>
<feature type="turn" evidence="7">
    <location>
        <begin position="92"/>
        <end position="95"/>
    </location>
</feature>
<feature type="strand" evidence="7">
    <location>
        <begin position="103"/>
        <end position="105"/>
    </location>
</feature>
<feature type="helix" evidence="7">
    <location>
        <begin position="115"/>
        <end position="121"/>
    </location>
</feature>
<feature type="strand" evidence="7">
    <location>
        <begin position="126"/>
        <end position="130"/>
    </location>
</feature>
<feature type="helix" evidence="7">
    <location>
        <begin position="135"/>
        <end position="147"/>
    </location>
</feature>
<feature type="strand" evidence="7">
    <location>
        <begin position="151"/>
        <end position="155"/>
    </location>
</feature>
<feature type="helix" evidence="7">
    <location>
        <begin position="162"/>
        <end position="170"/>
    </location>
</feature>
<feature type="turn" evidence="7">
    <location>
        <begin position="174"/>
        <end position="176"/>
    </location>
</feature>
<feature type="helix" evidence="7">
    <location>
        <begin position="177"/>
        <end position="179"/>
    </location>
</feature>
<feature type="strand" evidence="7">
    <location>
        <begin position="180"/>
        <end position="184"/>
    </location>
</feature>
<feature type="helix" evidence="7">
    <location>
        <begin position="191"/>
        <end position="197"/>
    </location>
</feature>
<feature type="turn" evidence="7">
    <location>
        <begin position="198"/>
        <end position="200"/>
    </location>
</feature>
<feature type="strand" evidence="7">
    <location>
        <begin position="203"/>
        <end position="206"/>
    </location>
</feature>
<feature type="helix" evidence="7">
    <location>
        <begin position="209"/>
        <end position="211"/>
    </location>
</feature>
<feature type="turn" evidence="7">
    <location>
        <begin position="214"/>
        <end position="216"/>
    </location>
</feature>
<feature type="strand" evidence="7">
    <location>
        <begin position="223"/>
        <end position="227"/>
    </location>
</feature>
<feature type="turn" evidence="7">
    <location>
        <begin position="229"/>
        <end position="231"/>
    </location>
</feature>
<feature type="helix" evidence="7">
    <location>
        <begin position="234"/>
        <end position="243"/>
    </location>
</feature>
<feature type="strand" evidence="7">
    <location>
        <begin position="247"/>
        <end position="251"/>
    </location>
</feature>
<feature type="helix" evidence="7">
    <location>
        <begin position="257"/>
        <end position="274"/>
    </location>
</feature>
<feature type="helix" evidence="7">
    <location>
        <begin position="275"/>
        <end position="277"/>
    </location>
</feature>
<feature type="helix" evidence="7">
    <location>
        <begin position="286"/>
        <end position="288"/>
    </location>
</feature>
<feature type="helix" evidence="7">
    <location>
        <begin position="295"/>
        <end position="297"/>
    </location>
</feature>
<feature type="strand" evidence="7">
    <location>
        <begin position="309"/>
        <end position="312"/>
    </location>
</feature>
<feature type="helix" evidence="7">
    <location>
        <begin position="316"/>
        <end position="320"/>
    </location>
</feature>
<protein>
    <recommendedName>
        <fullName evidence="3">o-succinylbenzoate synthase</fullName>
        <shortName evidence="1">OSB synthase</shortName>
        <shortName evidence="3">OSBS</shortName>
        <ecNumber evidence="2">4.2.1.113</ecNumber>
    </recommendedName>
    <alternativeName>
        <fullName evidence="1">4-(2'-carboxyphenyl)-4-oxybutyric acid synthase</fullName>
    </alternativeName>
    <alternativeName>
        <fullName evidence="1">o-succinylbenzoic acid synthase</fullName>
    </alternativeName>
</protein>
<organism>
    <name type="scientific">Bdellovibrio bacteriovorus (strain ATCC 15356 / DSM 50701 / NCIMB 9529 / HD100)</name>
    <dbReference type="NCBI Taxonomy" id="264462"/>
    <lineage>
        <taxon>Bacteria</taxon>
        <taxon>Pseudomonadati</taxon>
        <taxon>Bdellovibrionota</taxon>
        <taxon>Bdellovibrionia</taxon>
        <taxon>Bdellovibrionales</taxon>
        <taxon>Pseudobdellovibrionaceae</taxon>
        <taxon>Bdellovibrio</taxon>
    </lineage>
</organism>
<reference key="1">
    <citation type="journal article" date="2004" name="Science">
        <title>A predator unmasked: life cycle of Bdellovibrio bacteriovorus from a genomic perspective.</title>
        <authorList>
            <person name="Rendulic S."/>
            <person name="Jagtap P."/>
            <person name="Rosinus A."/>
            <person name="Eppinger M."/>
            <person name="Baar C."/>
            <person name="Lanz C."/>
            <person name="Keller H."/>
            <person name="Lambert C."/>
            <person name="Evans K.J."/>
            <person name="Goesmann A."/>
            <person name="Meyer F."/>
            <person name="Sockett R.E."/>
            <person name="Schuster S.C."/>
        </authorList>
    </citation>
    <scope>NUCLEOTIDE SEQUENCE [LARGE SCALE GENOMIC DNA]</scope>
    <source>
        <strain>ATCC 15356 / DSM 50701 / NCIMB 9529 / HD100</strain>
    </source>
</reference>
<reference evidence="6" key="2">
    <citation type="journal article" date="2014" name="Proc. Natl. Acad. Sci. U.S.A.">
        <title>Loss of quaternary structure is associated with rapid sequence divergence in the OSBS family.</title>
        <authorList>
            <person name="Odokonyero D."/>
            <person name="Sakai A."/>
            <person name="Patskovsky Y."/>
            <person name="Malashkevich V.N."/>
            <person name="Fedorov A.A."/>
            <person name="Bonanno J.B."/>
            <person name="Fedorov E.V."/>
            <person name="Toro R."/>
            <person name="Agarwal R."/>
            <person name="Wang C."/>
            <person name="Ozerova N.D."/>
            <person name="Yew W.S."/>
            <person name="Sauder J.M."/>
            <person name="Swaminathan S."/>
            <person name="Burley S.K."/>
            <person name="Almo S.C."/>
            <person name="Glasner M.E."/>
        </authorList>
    </citation>
    <scope>X-RAY CRYSTALLOGRAPHY (1.87 ANGSTROMS) IN COMPLEX WITH MAGNESIUM</scope>
    <scope>FUNCTION</scope>
    <scope>CATALYTIC ACTIVITY</scope>
    <scope>COFACTOR</scope>
    <scope>BIOPHYSICOCHEMICAL PROPERTIES</scope>
    <scope>SUBUNIT</scope>
    <source>
        <strain>ATCC 15356 / DSM 50701 / NCIMB 9529 / HD100</strain>
    </source>
</reference>
<gene>
    <name evidence="1" type="primary">menC</name>
    <name evidence="5" type="ordered locus">Bd0547</name>
</gene>
<comment type="function">
    <text evidence="2">Converts 2-succinyl-6-hydroxy-2,4-cyclohexadiene-1-carboxylate (SHCHC) to 2-succinylbenzoate (OSB) (PubMed:24872444). Does not show N-succinylamino acid racemase (NSAR) activity with N-succinyl-L-phenylglycine as substrate (PubMed:24872444).</text>
</comment>
<comment type="catalytic activity">
    <reaction evidence="2">
        <text>(1R,6R)-6-hydroxy-2-succinyl-cyclohexa-2,4-diene-1-carboxylate = 2-succinylbenzoate + H2O</text>
        <dbReference type="Rhea" id="RHEA:10196"/>
        <dbReference type="ChEBI" id="CHEBI:15377"/>
        <dbReference type="ChEBI" id="CHEBI:18325"/>
        <dbReference type="ChEBI" id="CHEBI:58689"/>
        <dbReference type="EC" id="4.2.1.113"/>
    </reaction>
</comment>
<comment type="cofactor">
    <cofactor evidence="2">
        <name>a divalent metal cation</name>
        <dbReference type="ChEBI" id="CHEBI:60240"/>
    </cofactor>
</comment>
<comment type="biophysicochemical properties">
    <kinetics>
        <KM evidence="2">53 uM for SHCHC</KM>
        <text evidence="2">kcat is 17 sec(-1) with SHCHC as substrate.</text>
    </kinetics>
</comment>
<comment type="pathway">
    <text evidence="1">Quinol/quinone metabolism; 1,4-dihydroxy-2-naphthoate biosynthesis; 1,4-dihydroxy-2-naphthoate from chorismate: step 4/7.</text>
</comment>
<comment type="pathway">
    <text evidence="1">Cofactor biosynthesis; phylloquinone biosynthesis.</text>
</comment>
<comment type="subunit">
    <text evidence="2">Monomer.</text>
</comment>
<comment type="similarity">
    <text evidence="4">Belongs to the mandelate racemase/muconate lactonizing enzyme family. MenC type 1 subfamily.</text>
</comment>
<evidence type="ECO:0000250" key="1">
    <source>
        <dbReference type="UniProtKB" id="P29208"/>
    </source>
</evidence>
<evidence type="ECO:0000269" key="2">
    <source>
    </source>
</evidence>
<evidence type="ECO:0000303" key="3">
    <source>
    </source>
</evidence>
<evidence type="ECO:0000305" key="4"/>
<evidence type="ECO:0000312" key="5">
    <source>
        <dbReference type="EMBL" id="CAE78520.1"/>
    </source>
</evidence>
<evidence type="ECO:0007744" key="6">
    <source>
        <dbReference type="PDB" id="3CAW"/>
    </source>
</evidence>
<evidence type="ECO:0007829" key="7">
    <source>
        <dbReference type="PDB" id="3CAW"/>
    </source>
</evidence>
<sequence length="330" mass="37401">MIKISYSPYTLKPVQSLNAATAATAREGVLLKVEWNDGLYGFADLHPWPELGDLSLEEQLSDLRMGRMTTQIEQSIWLARRDALLRKEKKHVFDGGEKIKNNYLLSHFQDLKPGFLDGLKNEGYNTVKVKMGRDLQKEADMLTHIAASGMRMRLDFNALGSWQTFEKFMVNLPLTVRPLIEYVEDPFPFDFHAWGEARKLAKIALDNQYDKVPWGKIASAPFDVIVIKPAKTDVDKAVAQCQKWNLKLAVTSYMDHPVGVVHAVGVAMELKDKYGDMILESGCLTHRLYQMDSFAAELSTQGPYLLKNKGTGVGFDKLLEALTWYQLKVR</sequence>
<accession>Q6MQC7</accession>
<keyword id="KW-0002">3D-structure</keyword>
<keyword id="KW-0456">Lyase</keyword>
<keyword id="KW-0460">Magnesium</keyword>
<keyword id="KW-0474">Menaquinone biosynthesis</keyword>
<keyword id="KW-0479">Metal-binding</keyword>
<keyword id="KW-1185">Reference proteome</keyword>